<accession>O14841</accession>
<accession>A5PKY8</accession>
<accession>Q75W65</accession>
<accession>Q9Y4Q0</accession>
<organism>
    <name type="scientific">Homo sapiens</name>
    <name type="common">Human</name>
    <dbReference type="NCBI Taxonomy" id="9606"/>
    <lineage>
        <taxon>Eukaryota</taxon>
        <taxon>Metazoa</taxon>
        <taxon>Chordata</taxon>
        <taxon>Craniata</taxon>
        <taxon>Vertebrata</taxon>
        <taxon>Euteleostomi</taxon>
        <taxon>Mammalia</taxon>
        <taxon>Eutheria</taxon>
        <taxon>Euarchontoglires</taxon>
        <taxon>Primates</taxon>
        <taxon>Haplorrhini</taxon>
        <taxon>Catarrhini</taxon>
        <taxon>Hominidae</taxon>
        <taxon>Homo</taxon>
    </lineage>
</organism>
<gene>
    <name evidence="9" type="primary">OPLAH</name>
</gene>
<feature type="chain" id="PRO_0000208577" description="5-oxoprolinase">
    <location>
        <begin position="1"/>
        <end position="1288"/>
    </location>
</feature>
<feature type="region of interest" description="Disordered" evidence="4">
    <location>
        <begin position="1248"/>
        <end position="1272"/>
    </location>
</feature>
<feature type="modified residue" description="Phosphothreonine" evidence="10">
    <location>
        <position position="151"/>
    </location>
</feature>
<feature type="modified residue" description="Phosphoserine" evidence="2">
    <location>
        <position position="1265"/>
    </location>
</feature>
<feature type="sequence variant" id="VAR_050425" description="In dbSNP:rs3935209.">
    <original>S</original>
    <variation>R</variation>
    <location>
        <position position="284"/>
    </location>
</feature>
<feature type="sequence variant" id="VAR_088518" description="In OPLAHD; uncertain significance; dbSNP:rs398122906." evidence="6">
    <original>S</original>
    <variation>R</variation>
    <location>
        <position position="323"/>
    </location>
</feature>
<feature type="sequence variant" id="VAR_088519" description="In OPLAHD; likely benign; dbSNP:rs185836803." evidence="6">
    <original>V</original>
    <variation>I</variation>
    <location>
        <position position="1089"/>
    </location>
</feature>
<feature type="sequence conflict" description="In Ref. 4; AAB81519." evidence="8" ref="4">
    <original>QRVVDV</original>
    <variation>NAWWMF</variation>
    <location>
        <begin position="1084"/>
        <end position="1089"/>
    </location>
</feature>
<protein>
    <recommendedName>
        <fullName>5-oxoprolinase</fullName>
        <ecNumber evidence="3">3.5.2.9</ecNumber>
    </recommendedName>
    <alternativeName>
        <fullName evidence="7">5-oxo-L-prolinase</fullName>
        <shortName>5-OPase</shortName>
    </alternativeName>
    <alternativeName>
        <fullName>Pyroglutamase</fullName>
    </alternativeName>
</protein>
<dbReference type="EC" id="3.5.2.9" evidence="3"/>
<dbReference type="EMBL" id="AB122018">
    <property type="protein sequence ID" value="BAD13434.1"/>
    <property type="molecule type" value="mRNA"/>
</dbReference>
<dbReference type="EMBL" id="BC142672">
    <property type="protein sequence ID" value="AAI42673.1"/>
    <property type="molecule type" value="mRNA"/>
</dbReference>
<dbReference type="EMBL" id="AL096750">
    <property type="protein sequence ID" value="CAB46426.2"/>
    <property type="status" value="ALT_FRAME"/>
    <property type="molecule type" value="mRNA"/>
</dbReference>
<dbReference type="EMBL" id="AH005594">
    <property type="protein sequence ID" value="AAB81519.1"/>
    <property type="status" value="ALT_FRAME"/>
    <property type="molecule type" value="Genomic_DNA"/>
</dbReference>
<dbReference type="CCDS" id="CCDS75802.1"/>
<dbReference type="PIR" id="T12537">
    <property type="entry name" value="T12537"/>
</dbReference>
<dbReference type="RefSeq" id="NP_060040.1">
    <property type="nucleotide sequence ID" value="NM_017570.5"/>
</dbReference>
<dbReference type="RefSeq" id="XP_047277648.1">
    <property type="nucleotide sequence ID" value="XM_047421692.1"/>
</dbReference>
<dbReference type="SMR" id="O14841"/>
<dbReference type="BioGRID" id="117922">
    <property type="interactions" value="16"/>
</dbReference>
<dbReference type="FunCoup" id="O14841">
    <property type="interactions" value="575"/>
</dbReference>
<dbReference type="IntAct" id="O14841">
    <property type="interactions" value="7"/>
</dbReference>
<dbReference type="MINT" id="O14841"/>
<dbReference type="STRING" id="9606.ENSP00000480476"/>
<dbReference type="DrugBank" id="DB00142">
    <property type="generic name" value="Glutamic acid"/>
</dbReference>
<dbReference type="GlyGen" id="O14841">
    <property type="glycosylation" value="1 site, 1 O-linked glycan (1 site)"/>
</dbReference>
<dbReference type="iPTMnet" id="O14841"/>
<dbReference type="MetOSite" id="O14841"/>
<dbReference type="PhosphoSitePlus" id="O14841"/>
<dbReference type="BioMuta" id="OPLAH"/>
<dbReference type="jPOST" id="O14841"/>
<dbReference type="MassIVE" id="O14841"/>
<dbReference type="PaxDb" id="9606-ENSP00000480476"/>
<dbReference type="PeptideAtlas" id="O14841"/>
<dbReference type="ProteomicsDB" id="48272"/>
<dbReference type="Pumba" id="O14841"/>
<dbReference type="Antibodypedia" id="7618">
    <property type="antibodies" value="71 antibodies from 22 providers"/>
</dbReference>
<dbReference type="DNASU" id="26873"/>
<dbReference type="Ensembl" id="ENST00000618853.5">
    <property type="protein sequence ID" value="ENSP00000480476.1"/>
    <property type="gene ID" value="ENSG00000178814.17"/>
</dbReference>
<dbReference type="GeneID" id="26873"/>
<dbReference type="KEGG" id="hsa:26873"/>
<dbReference type="MANE-Select" id="ENST00000618853.5">
    <property type="protein sequence ID" value="ENSP00000480476.1"/>
    <property type="RefSeq nucleotide sequence ID" value="NM_017570.5"/>
    <property type="RefSeq protein sequence ID" value="NP_060040.1"/>
</dbReference>
<dbReference type="UCSC" id="uc033cce.2">
    <property type="organism name" value="human"/>
</dbReference>
<dbReference type="AGR" id="HGNC:8149"/>
<dbReference type="CTD" id="26873"/>
<dbReference type="DisGeNET" id="26873"/>
<dbReference type="GeneCards" id="OPLAH"/>
<dbReference type="HGNC" id="HGNC:8149">
    <property type="gene designation" value="OPLAH"/>
</dbReference>
<dbReference type="HPA" id="ENSG00000178814">
    <property type="expression patterns" value="Tissue enhanced (testis)"/>
</dbReference>
<dbReference type="MalaCards" id="OPLAH"/>
<dbReference type="MIM" id="260005">
    <property type="type" value="phenotype"/>
</dbReference>
<dbReference type="MIM" id="614243">
    <property type="type" value="gene"/>
</dbReference>
<dbReference type="neXtProt" id="NX_O14841"/>
<dbReference type="OpenTargets" id="ENSG00000178814"/>
<dbReference type="Orphanet" id="33572">
    <property type="disease" value="5-oxoprolinase deficiency"/>
</dbReference>
<dbReference type="PharmGKB" id="PA31935"/>
<dbReference type="VEuPathDB" id="HostDB:ENSG00000178814"/>
<dbReference type="eggNOG" id="KOG1939">
    <property type="taxonomic scope" value="Eukaryota"/>
</dbReference>
<dbReference type="GeneTree" id="ENSGT00390000013463"/>
<dbReference type="HOGENOM" id="CLU_002157_0_0_1"/>
<dbReference type="InParanoid" id="O14841"/>
<dbReference type="OMA" id="TDCNVML"/>
<dbReference type="OrthoDB" id="3643at2759"/>
<dbReference type="PAN-GO" id="O14841">
    <property type="GO annotations" value="2 GO annotations based on evolutionary models"/>
</dbReference>
<dbReference type="PhylomeDB" id="O14841"/>
<dbReference type="BioCyc" id="MetaCyc:HS11319-MONOMER"/>
<dbReference type="BRENDA" id="3.5.2.9">
    <property type="organism ID" value="2681"/>
</dbReference>
<dbReference type="PathwayCommons" id="O14841"/>
<dbReference type="Reactome" id="R-HSA-174403">
    <property type="pathway name" value="Glutathione synthesis and recycling"/>
</dbReference>
<dbReference type="Reactome" id="R-HSA-5578998">
    <property type="pathway name" value="Defective OPLAH causes OPLAHD"/>
</dbReference>
<dbReference type="SignaLink" id="O14841"/>
<dbReference type="BioGRID-ORCS" id="26873">
    <property type="hits" value="10 hits in 302 CRISPR screens"/>
</dbReference>
<dbReference type="GenomeRNAi" id="26873"/>
<dbReference type="Pharos" id="O14841">
    <property type="development level" value="Tbio"/>
</dbReference>
<dbReference type="PRO" id="PR:O14841"/>
<dbReference type="Proteomes" id="UP000005640">
    <property type="component" value="Chromosome 8"/>
</dbReference>
<dbReference type="RNAct" id="O14841">
    <property type="molecule type" value="protein"/>
</dbReference>
<dbReference type="Bgee" id="ENSG00000178814">
    <property type="expression patterns" value="Expressed in apex of heart and 140 other cell types or tissues"/>
</dbReference>
<dbReference type="ExpressionAtlas" id="O14841">
    <property type="expression patterns" value="baseline and differential"/>
</dbReference>
<dbReference type="GO" id="GO:0005829">
    <property type="term" value="C:cytosol"/>
    <property type="evidence" value="ECO:0000250"/>
    <property type="project" value="UniProtKB"/>
</dbReference>
<dbReference type="GO" id="GO:0017168">
    <property type="term" value="F:5-oxoprolinase (ATP-hydrolyzing) activity"/>
    <property type="evidence" value="ECO:0000250"/>
    <property type="project" value="UniProtKB"/>
</dbReference>
<dbReference type="GO" id="GO:0005524">
    <property type="term" value="F:ATP binding"/>
    <property type="evidence" value="ECO:0007669"/>
    <property type="project" value="UniProtKB-KW"/>
</dbReference>
<dbReference type="GO" id="GO:0042802">
    <property type="term" value="F:identical protein binding"/>
    <property type="evidence" value="ECO:0000353"/>
    <property type="project" value="IntAct"/>
</dbReference>
<dbReference type="GO" id="GO:0006749">
    <property type="term" value="P:glutathione metabolic process"/>
    <property type="evidence" value="ECO:0000318"/>
    <property type="project" value="GO_Central"/>
</dbReference>
<dbReference type="InterPro" id="IPR049517">
    <property type="entry name" value="ACX-like_C"/>
</dbReference>
<dbReference type="InterPro" id="IPR008040">
    <property type="entry name" value="Hydant_A_N"/>
</dbReference>
<dbReference type="InterPro" id="IPR002821">
    <property type="entry name" value="Hydantoinase_A"/>
</dbReference>
<dbReference type="InterPro" id="IPR003692">
    <property type="entry name" value="Hydantoinase_B"/>
</dbReference>
<dbReference type="InterPro" id="IPR045079">
    <property type="entry name" value="Oxoprolinase-like"/>
</dbReference>
<dbReference type="PANTHER" id="PTHR11365:SF2">
    <property type="entry name" value="5-OXOPROLINASE"/>
    <property type="match status" value="1"/>
</dbReference>
<dbReference type="PANTHER" id="PTHR11365">
    <property type="entry name" value="5-OXOPROLINASE RELATED"/>
    <property type="match status" value="1"/>
</dbReference>
<dbReference type="Pfam" id="PF19278">
    <property type="entry name" value="Hydant_A_C"/>
    <property type="match status" value="1"/>
</dbReference>
<dbReference type="Pfam" id="PF05378">
    <property type="entry name" value="Hydant_A_N"/>
    <property type="match status" value="1"/>
</dbReference>
<dbReference type="Pfam" id="PF01968">
    <property type="entry name" value="Hydantoinase_A"/>
    <property type="match status" value="1"/>
</dbReference>
<dbReference type="Pfam" id="PF02538">
    <property type="entry name" value="Hydantoinase_B"/>
    <property type="match status" value="1"/>
</dbReference>
<keyword id="KW-0067">ATP-binding</keyword>
<keyword id="KW-0963">Cytoplasm</keyword>
<keyword id="KW-0378">Hydrolase</keyword>
<keyword id="KW-0547">Nucleotide-binding</keyword>
<keyword id="KW-0597">Phosphoprotein</keyword>
<keyword id="KW-1267">Proteomics identification</keyword>
<keyword id="KW-1185">Reference proteome</keyword>
<name>OPLA_HUMAN</name>
<sequence>MGSPEGRFHFAIDRGGTFTDVFAQCPGGHVRVLKLLSEDPANYADAPTEGIRRILEQEAGMLLPRDQPLDSSHIASIRMGTTVATNALLERKGERVALLVTRGFRDLLHIGTQARGDLFDLAVPMPEVLYEEVLEVDERVVLHRGEAGTGTPVKGRTGDLLEVQQPVDLGALRGKLEGLLSRGIRSLAVVLMHSYTWAQHEQQVGVLARELGFTHVSLSSEAMPMVRIVPRGHTACADAYLTPAIQRYVQGFCRGFQGQLKDVQVLFMRSDGGLAPMDTFSGSSAVLSGPAGGVVGYSATTYQQEGGQPVIGFDMGGTSTDVSRYAGEFEHVFEASTAGVTLQAPQLDINTVAAGGGSRLFFRSGLFVVGPESAGAHPGPACYRKGGPVTVTDANLVLGRLLPASFPCIFGPGENQPLSPEASRKALEAVATEVNSFLTNGPCPASPLSLEEVAMGFVRVANEAMCRPIRALTQARGHDPSAHVLACFGGAGGQHACAIARALGMDTVHIHRHSGLLSALGLALADVVHEAQEPCSLLYAPETFVQLDQRLSRLEEQCVDALQAQGFPRSQISTESFLHLRYQGTDCALMVSAHQHPATARSPRAGDFGAAFVERYMREFGFVIPERPVVVDDVRVRGTGRSGLRLEDAPKAQTGPPRVDKMTQCYFEGGYQETPVYLLAELGYGHKLHGPCLIIDSNSTILVEPGCQAEVTKTGDICISVGAEVPGTVGPQLDPIQLSIFSHRFMSIAEQMGRILQRTAISTNIKERLDFSCALFGPDGGLVSNAPHIPVHLGAMQETVQFQIQHLGADLHPGDVLLSNHPSAGGSHLPDLTVITPVFWPGQTRPVFYVASRGHHADIGGITPGSMPPHSTMLQQEGAVFLSFKLVQGGVFQEEAVTEALRAPGKVPNCSGTRNLHDNLSDLRAQVAANQKGIQLVGELIGQYGLDVVQAYMGHIQANAELAVRDMLRAFGTSRQARGLPLEVSSEDHMDDGSPIRLRVQISLSQGSAVFDFSGTGPEVFGNLNAPRAVTLSALIYCLRCLVGRDIPLNQGCLAPVRVVIPRGSILDPSPEAAVVGGNVLTSQRVVDVILGAFGACAASQGCMNNVTLGNAHMGYYETVAGGAGAGPSWHGRSGVHSHMTNTRITDPEILESRYPVILRRFELRRGSGGRGRFRGGDGVTRELLFREEALLSVLTERRAFRPYGLHGGEPGARGLNLLIRKNGRTVNLGGKTSVTVYPGDVFCLHTPGGGGYGDPEDPAPPPGSPPQALAFPEHGSVYEYRRAQEAV</sequence>
<proteinExistence type="evidence at protein level"/>
<reference key="1">
    <citation type="journal article" date="2004" name="Biol. Pharm. Bull.">
        <title>Bovine 5-oxo-L-prolinase: simple assay method, purification, cDNA cloning, and detection of mRNA in the coronary artery.</title>
        <authorList>
            <person name="Watanabe T."/>
            <person name="Abe K."/>
            <person name="Ishikawa H."/>
            <person name="Iijima Y."/>
        </authorList>
    </citation>
    <scope>NUCLEOTIDE SEQUENCE [MRNA]</scope>
</reference>
<reference key="2">
    <citation type="journal article" date="2004" name="Genome Res.">
        <title>The status, quality, and expansion of the NIH full-length cDNA project: the Mammalian Gene Collection (MGC).</title>
        <authorList>
            <consortium name="The MGC Project Team"/>
        </authorList>
    </citation>
    <scope>NUCLEOTIDE SEQUENCE [LARGE SCALE MRNA]</scope>
</reference>
<reference key="3">
    <citation type="journal article" date="2007" name="BMC Genomics">
        <title>The full-ORF clone resource of the German cDNA consortium.</title>
        <authorList>
            <person name="Bechtel S."/>
            <person name="Rosenfelder H."/>
            <person name="Duda A."/>
            <person name="Schmidt C.P."/>
            <person name="Ernst U."/>
            <person name="Wellenreuther R."/>
            <person name="Mehrle A."/>
            <person name="Schuster C."/>
            <person name="Bahr A."/>
            <person name="Bloecker H."/>
            <person name="Heubner D."/>
            <person name="Hoerlein A."/>
            <person name="Michel G."/>
            <person name="Wedler H."/>
            <person name="Koehrer K."/>
            <person name="Ottenwaelder B."/>
            <person name="Poustka A."/>
            <person name="Wiemann S."/>
            <person name="Schupp I."/>
        </authorList>
    </citation>
    <scope>NUCLEOTIDE SEQUENCE [LARGE SCALE MRNA] OF 229-1288</scope>
    <source>
        <tissue>Testis</tissue>
    </source>
</reference>
<reference key="4">
    <citation type="submission" date="1997-09" db="EMBL/GenBank/DDBJ databases">
        <title>Human 5-oxo-L-prolinase partial sequence.</title>
        <authorList>
            <person name="Debella L.R."/>
            <person name="Wood S."/>
        </authorList>
    </citation>
    <scope>NUCLEOTIDE SEQUENCE [GENOMIC DNA] OF 901-1096</scope>
</reference>
<reference key="5">
    <citation type="journal article" date="2011" name="BMC Syst. Biol.">
        <title>Initial characterization of the human central proteome.</title>
        <authorList>
            <person name="Burkard T.R."/>
            <person name="Planyavsky M."/>
            <person name="Kaupe I."/>
            <person name="Breitwieser F.P."/>
            <person name="Buerckstuemmer T."/>
            <person name="Bennett K.L."/>
            <person name="Superti-Furga G."/>
            <person name="Colinge J."/>
        </authorList>
    </citation>
    <scope>IDENTIFICATION BY MASS SPECTROMETRY [LARGE SCALE ANALYSIS]</scope>
</reference>
<reference key="6">
    <citation type="journal article" date="2012" name="Clin. Genet.">
        <title>5-Oxoprolinase deficiency: report of the first human OPLAH mutation.</title>
        <authorList>
            <person name="Almaghlouth I."/>
            <person name="Mohamed J."/>
            <person name="Al-Amoudi M."/>
            <person name="Al-Ahaidib L."/>
            <person name="Al-Odaib A."/>
            <person name="Alkuraya F."/>
        </authorList>
    </citation>
    <scope>INVOLVEMENT IN OPLAHD</scope>
</reference>
<reference key="7">
    <citation type="journal article" date="2013" name="J. Proteome Res.">
        <title>Toward a comprehensive characterization of a human cancer cell phosphoproteome.</title>
        <authorList>
            <person name="Zhou H."/>
            <person name="Di Palma S."/>
            <person name="Preisinger C."/>
            <person name="Peng M."/>
            <person name="Polat A.N."/>
            <person name="Heck A.J."/>
            <person name="Mohammed S."/>
        </authorList>
    </citation>
    <scope>PHOSPHORYLATION [LARGE SCALE ANALYSIS] AT THR-151</scope>
    <scope>IDENTIFICATION BY MASS SPECTROMETRY [LARGE SCALE ANALYSIS]</scope>
    <source>
        <tissue>Erythroleukemia</tissue>
    </source>
</reference>
<reference key="8">
    <citation type="journal article" date="2014" name="J. Proteomics">
        <title>An enzyme assisted RP-RPLC approach for in-depth analysis of human liver phosphoproteome.</title>
        <authorList>
            <person name="Bian Y."/>
            <person name="Song C."/>
            <person name="Cheng K."/>
            <person name="Dong M."/>
            <person name="Wang F."/>
            <person name="Huang J."/>
            <person name="Sun D."/>
            <person name="Wang L."/>
            <person name="Ye M."/>
            <person name="Zou H."/>
        </authorList>
    </citation>
    <scope>IDENTIFICATION BY MASS SPECTROMETRY [LARGE SCALE ANALYSIS]</scope>
    <source>
        <tissue>Liver</tissue>
    </source>
</reference>
<reference key="9">
    <citation type="journal article" date="2013" name="JIMD Rep.">
        <title>5-Oxoprolinuria in Heterozygous Patients for 5-Oxoprolinase (OPLAH) Missense Changes.</title>
        <authorList>
            <person name="Calpena E."/>
            <person name="Casado M."/>
            <person name="Martinez-Rubio D."/>
            <person name="Nascimento A."/>
            <person name="Colomer J."/>
            <person name="Gargallo E."/>
            <person name="Garcia-Cazorla A."/>
            <person name="Palau F."/>
            <person name="Artuch R."/>
            <person name="Espinos C."/>
        </authorList>
    </citation>
    <scope>VARIANTS OPLAHD ARG-323 AND ILE-1089</scope>
</reference>
<comment type="function">
    <text evidence="3">Catalyzes the cleavage of 5-oxo-L-proline to form L-glutamate coupled to the hydrolysis of ATP to ADP and inorganic phosphate.</text>
</comment>
<comment type="catalytic activity">
    <reaction evidence="3">
        <text>5-oxo-L-proline + ATP + 2 H2O = L-glutamate + ADP + phosphate + H(+)</text>
        <dbReference type="Rhea" id="RHEA:10348"/>
        <dbReference type="ChEBI" id="CHEBI:15377"/>
        <dbReference type="ChEBI" id="CHEBI:15378"/>
        <dbReference type="ChEBI" id="CHEBI:29985"/>
        <dbReference type="ChEBI" id="CHEBI:30616"/>
        <dbReference type="ChEBI" id="CHEBI:43474"/>
        <dbReference type="ChEBI" id="CHEBI:58402"/>
        <dbReference type="ChEBI" id="CHEBI:456216"/>
        <dbReference type="EC" id="3.5.2.9"/>
    </reaction>
</comment>
<comment type="subunit">
    <text evidence="1">Homodimer.</text>
</comment>
<comment type="interaction">
    <interactant intactId="EBI-3938544">
        <id>O14841</id>
    </interactant>
    <interactant intactId="EBI-3938544">
        <id>O14841</id>
        <label>OPLAH</label>
    </interactant>
    <organismsDiffer>false</organismsDiffer>
    <experiments>3</experiments>
</comment>
<comment type="interaction">
    <interactant intactId="EBI-3938544">
        <id>O14841</id>
    </interactant>
    <interactant intactId="EBI-12029004">
        <id>P78424</id>
        <label>POU6F2</label>
    </interactant>
    <organismsDiffer>false</organismsDiffer>
    <experiments>3</experiments>
</comment>
<comment type="interaction">
    <interactant intactId="EBI-3938544">
        <id>O14841</id>
    </interactant>
    <interactant intactId="EBI-7054500">
        <id>Q9H3S4</id>
        <label>TPK1</label>
    </interactant>
    <organismsDiffer>false</organismsDiffer>
    <experiments>3</experiments>
</comment>
<comment type="subcellular location">
    <subcellularLocation>
        <location evidence="3">Cytoplasm</location>
        <location evidence="3">Cytosol</location>
    </subcellularLocation>
</comment>
<comment type="disease" evidence="5 6">
    <disease id="DI-03412">
        <name>5-oxoprolinase deficiency</name>
        <acronym>OPLAHD</acronym>
        <description>A disorder characterized by calcium oxalate/carbonate urolithiasis, and excessive urinary 5-oxo-L-proline. Affected individuals have recurrent episodes of vomiting, diarrhea, and abdominal pain.</description>
        <dbReference type="MIM" id="260005"/>
    </disease>
    <text>The disease is caused by variants affecting the gene represented in this entry.</text>
</comment>
<comment type="similarity">
    <text evidence="8">Belongs to the oxoprolinase family.</text>
</comment>
<comment type="sequence caution" evidence="8">
    <conflict type="frameshift">
        <sequence resource="EMBL-CDS" id="AAB81519"/>
    </conflict>
</comment>
<comment type="sequence caution" evidence="8">
    <conflict type="frameshift">
        <sequence resource="EMBL-CDS" id="CAB46426"/>
    </conflict>
</comment>
<evidence type="ECO:0000250" key="1"/>
<evidence type="ECO:0000250" key="2">
    <source>
        <dbReference type="UniProtKB" id="P97608"/>
    </source>
</evidence>
<evidence type="ECO:0000250" key="3">
    <source>
        <dbReference type="UniProtKB" id="Q75WB5"/>
    </source>
</evidence>
<evidence type="ECO:0000256" key="4">
    <source>
        <dbReference type="SAM" id="MobiDB-lite"/>
    </source>
</evidence>
<evidence type="ECO:0000269" key="5">
    <source>
    </source>
</evidence>
<evidence type="ECO:0000269" key="6">
    <source>
    </source>
</evidence>
<evidence type="ECO:0000303" key="7">
    <source>
    </source>
</evidence>
<evidence type="ECO:0000305" key="8"/>
<evidence type="ECO:0000312" key="9">
    <source>
        <dbReference type="HGNC" id="HGNC:8149"/>
    </source>
</evidence>
<evidence type="ECO:0007744" key="10">
    <source>
    </source>
</evidence>